<sequence>MLKKNDIVEVEISDLSHDGAGIAKVDGLVFFVDNALPTEKIRMRVLKVKKNIAFGKVESYLAKSAYRSDNLTVDYLRTGIADLGHLTYGQQLNFKRKQVINSLSKIAGISDIEVADTLGMDNPTAYRNKAQVPVRRVNGQLETGFFRKNSHALMPIEDYYIQDKEIDRLINFTRDLLRRFDLKPYDEKEQTGLIRNLVVRRGHYTGQIMLVLVTTRSKIFRIEQMIEKIISEFPAVKSIIQNINDRNTNAIFGSEFRTLYGEDTIEDTMLGNRYIISAQSFYQVNTVMAEKLYQTAIDFSDLTPDDTVIDAYSGIGTIGLSFAKKVKDVYGVEVIEAAVRDAEKNAALNNITNVHYVADSAEKAMASWSKRGIKPDVILVDPPRKGLTESFIEASTAMQPRKITYISCAPATMARDVKLYEELGYKLVKVQPVDLFPQTHHVECVALLVKA</sequence>
<reference key="1">
    <citation type="journal article" date="2002" name="Proc. Natl. Acad. Sci. U.S.A.">
        <title>Genome sequence of Streptococcus mutans UA159, a cariogenic dental pathogen.</title>
        <authorList>
            <person name="Ajdic D.J."/>
            <person name="McShan W.M."/>
            <person name="McLaughlin R.E."/>
            <person name="Savic G."/>
            <person name="Chang J."/>
            <person name="Carson M.B."/>
            <person name="Primeaux C."/>
            <person name="Tian R."/>
            <person name="Kenton S."/>
            <person name="Jia H.G."/>
            <person name="Lin S.P."/>
            <person name="Qian Y."/>
            <person name="Li S."/>
            <person name="Zhu H."/>
            <person name="Najar F.Z."/>
            <person name="Lai H."/>
            <person name="White J."/>
            <person name="Roe B.A."/>
            <person name="Ferretti J.J."/>
        </authorList>
    </citation>
    <scope>NUCLEOTIDE SEQUENCE [LARGE SCALE GENOMIC DNA]</scope>
    <source>
        <strain>ATCC 700610 / UA159</strain>
    </source>
</reference>
<protein>
    <recommendedName>
        <fullName>Uncharacterized RNA methyltransferase SMU_788</fullName>
        <ecNumber>2.1.1.-</ecNumber>
    </recommendedName>
</protein>
<accession>Q8DUV4</accession>
<organism>
    <name type="scientific">Streptococcus mutans serotype c (strain ATCC 700610 / UA159)</name>
    <dbReference type="NCBI Taxonomy" id="210007"/>
    <lineage>
        <taxon>Bacteria</taxon>
        <taxon>Bacillati</taxon>
        <taxon>Bacillota</taxon>
        <taxon>Bacilli</taxon>
        <taxon>Lactobacillales</taxon>
        <taxon>Streptococcaceae</taxon>
        <taxon>Streptococcus</taxon>
    </lineage>
</organism>
<proteinExistence type="inferred from homology"/>
<comment type="similarity">
    <text evidence="2">Belongs to the class I-like SAM-binding methyltransferase superfamily. RNA M5U methyltransferase family.</text>
</comment>
<name>Y788_STRMU</name>
<gene>
    <name type="ordered locus">SMU_788</name>
</gene>
<feature type="chain" id="PRO_0000162029" description="Uncharacterized RNA methyltransferase SMU_788">
    <location>
        <begin position="1"/>
        <end position="451"/>
    </location>
</feature>
<feature type="domain" description="TRAM" evidence="1">
    <location>
        <begin position="1"/>
        <end position="59"/>
    </location>
</feature>
<feature type="active site" description="Nucleophile" evidence="2">
    <location>
        <position position="408"/>
    </location>
</feature>
<feature type="binding site" evidence="2">
    <location>
        <position position="283"/>
    </location>
    <ligand>
        <name>S-adenosyl-L-methionine</name>
        <dbReference type="ChEBI" id="CHEBI:59789"/>
    </ligand>
</feature>
<feature type="binding site" evidence="2">
    <location>
        <position position="312"/>
    </location>
    <ligand>
        <name>S-adenosyl-L-methionine</name>
        <dbReference type="ChEBI" id="CHEBI:59789"/>
    </ligand>
</feature>
<feature type="binding site" evidence="2">
    <location>
        <position position="333"/>
    </location>
    <ligand>
        <name>S-adenosyl-L-methionine</name>
        <dbReference type="ChEBI" id="CHEBI:59789"/>
    </ligand>
</feature>
<feature type="binding site" evidence="2">
    <location>
        <position position="381"/>
    </location>
    <ligand>
        <name>S-adenosyl-L-methionine</name>
        <dbReference type="ChEBI" id="CHEBI:59789"/>
    </ligand>
</feature>
<evidence type="ECO:0000255" key="1">
    <source>
        <dbReference type="PROSITE-ProRule" id="PRU00208"/>
    </source>
</evidence>
<evidence type="ECO:0000255" key="2">
    <source>
        <dbReference type="PROSITE-ProRule" id="PRU01024"/>
    </source>
</evidence>
<keyword id="KW-0489">Methyltransferase</keyword>
<keyword id="KW-1185">Reference proteome</keyword>
<keyword id="KW-0949">S-adenosyl-L-methionine</keyword>
<keyword id="KW-0808">Transferase</keyword>
<dbReference type="EC" id="2.1.1.-"/>
<dbReference type="EMBL" id="AE014133">
    <property type="protein sequence ID" value="AAN58507.1"/>
    <property type="molecule type" value="Genomic_DNA"/>
</dbReference>
<dbReference type="RefSeq" id="NP_721201.1">
    <property type="nucleotide sequence ID" value="NC_004350.2"/>
</dbReference>
<dbReference type="SMR" id="Q8DUV4"/>
<dbReference type="STRING" id="210007.SMU_788"/>
<dbReference type="KEGG" id="smu:SMU_788"/>
<dbReference type="PATRIC" id="fig|210007.7.peg.698"/>
<dbReference type="eggNOG" id="COG2265">
    <property type="taxonomic scope" value="Bacteria"/>
</dbReference>
<dbReference type="HOGENOM" id="CLU_014689_7_0_9"/>
<dbReference type="OrthoDB" id="9804590at2"/>
<dbReference type="PhylomeDB" id="Q8DUV4"/>
<dbReference type="Proteomes" id="UP000002512">
    <property type="component" value="Chromosome"/>
</dbReference>
<dbReference type="GO" id="GO:0070041">
    <property type="term" value="F:rRNA (uridine-C5-)-methyltransferase activity"/>
    <property type="evidence" value="ECO:0007669"/>
    <property type="project" value="TreeGrafter"/>
</dbReference>
<dbReference type="GO" id="GO:0070475">
    <property type="term" value="P:rRNA base methylation"/>
    <property type="evidence" value="ECO:0007669"/>
    <property type="project" value="TreeGrafter"/>
</dbReference>
<dbReference type="CDD" id="cd02440">
    <property type="entry name" value="AdoMet_MTases"/>
    <property type="match status" value="1"/>
</dbReference>
<dbReference type="FunFam" id="3.40.50.150:FF:000009">
    <property type="entry name" value="23S rRNA (Uracil(1939)-C(5))-methyltransferase RlmD"/>
    <property type="match status" value="1"/>
</dbReference>
<dbReference type="FunFam" id="2.40.50.1070:FF:000003">
    <property type="entry name" value="23S rRNA (Uracil-5-)-methyltransferase RumA"/>
    <property type="match status" value="1"/>
</dbReference>
<dbReference type="Gene3D" id="2.40.50.1070">
    <property type="match status" value="1"/>
</dbReference>
<dbReference type="Gene3D" id="2.40.50.140">
    <property type="entry name" value="Nucleic acid-binding proteins"/>
    <property type="match status" value="1"/>
</dbReference>
<dbReference type="Gene3D" id="3.40.50.150">
    <property type="entry name" value="Vaccinia Virus protein VP39"/>
    <property type="match status" value="1"/>
</dbReference>
<dbReference type="InterPro" id="IPR030390">
    <property type="entry name" value="MeTrfase_TrmA_AS"/>
</dbReference>
<dbReference type="InterPro" id="IPR030391">
    <property type="entry name" value="MeTrfase_TrmA_CS"/>
</dbReference>
<dbReference type="InterPro" id="IPR012340">
    <property type="entry name" value="NA-bd_OB-fold"/>
</dbReference>
<dbReference type="InterPro" id="IPR029063">
    <property type="entry name" value="SAM-dependent_MTases_sf"/>
</dbReference>
<dbReference type="InterPro" id="IPR002792">
    <property type="entry name" value="TRAM_dom"/>
</dbReference>
<dbReference type="InterPro" id="IPR010280">
    <property type="entry name" value="U5_MeTrfase_fam"/>
</dbReference>
<dbReference type="NCBIfam" id="TIGR00479">
    <property type="entry name" value="rumA"/>
    <property type="match status" value="1"/>
</dbReference>
<dbReference type="PANTHER" id="PTHR11061">
    <property type="entry name" value="RNA M5U METHYLTRANSFERASE"/>
    <property type="match status" value="1"/>
</dbReference>
<dbReference type="PANTHER" id="PTHR11061:SF30">
    <property type="entry name" value="TRNA (URACIL(54)-C(5))-METHYLTRANSFERASE"/>
    <property type="match status" value="1"/>
</dbReference>
<dbReference type="Pfam" id="PF01938">
    <property type="entry name" value="TRAM"/>
    <property type="match status" value="1"/>
</dbReference>
<dbReference type="Pfam" id="PF05958">
    <property type="entry name" value="tRNA_U5-meth_tr"/>
    <property type="match status" value="1"/>
</dbReference>
<dbReference type="SUPFAM" id="SSF50249">
    <property type="entry name" value="Nucleic acid-binding proteins"/>
    <property type="match status" value="1"/>
</dbReference>
<dbReference type="SUPFAM" id="SSF53335">
    <property type="entry name" value="S-adenosyl-L-methionine-dependent methyltransferases"/>
    <property type="match status" value="1"/>
</dbReference>
<dbReference type="PROSITE" id="PS51687">
    <property type="entry name" value="SAM_MT_RNA_M5U"/>
    <property type="match status" value="1"/>
</dbReference>
<dbReference type="PROSITE" id="PS50926">
    <property type="entry name" value="TRAM"/>
    <property type="match status" value="1"/>
</dbReference>
<dbReference type="PROSITE" id="PS01230">
    <property type="entry name" value="TRMA_1"/>
    <property type="match status" value="1"/>
</dbReference>
<dbReference type="PROSITE" id="PS01231">
    <property type="entry name" value="TRMA_2"/>
    <property type="match status" value="1"/>
</dbReference>